<name>NTDP_STRP3</name>
<sequence>MKLPKEGDFITIQSYKHDGSLHRTWRDTMVLKTTENALIGVNDHTLVTESDGRRWVTREPAIVYFHKKYWFNIIAMIRDNGVSYYCNLASPYMMDTEALKYIDYDLDVKVFADGEKRLLDVDEYGIHKKEMQYSADMDFILKENVKILVDWINHEKGPFSKAYITIWYKRYLELKNR</sequence>
<feature type="chain" id="PRO_0000248122" description="Nucleoside triphosphate/diphosphate phosphatase">
    <location>
        <begin position="1"/>
        <end position="177"/>
    </location>
</feature>
<feature type="active site" description="Proton donor" evidence="1">
    <location>
        <position position="23"/>
    </location>
</feature>
<feature type="binding site" evidence="1">
    <location>
        <position position="87"/>
    </location>
    <ligand>
        <name>Mg(2+)</name>
        <dbReference type="ChEBI" id="CHEBI:18420"/>
        <label>1</label>
    </ligand>
</feature>
<feature type="binding site" evidence="1">
    <location>
        <position position="103"/>
    </location>
    <ligand>
        <name>Mg(2+)</name>
        <dbReference type="ChEBI" id="CHEBI:18420"/>
        <label>1</label>
    </ligand>
</feature>
<feature type="binding site" evidence="1">
    <location>
        <position position="105"/>
    </location>
    <ligand>
        <name>Mg(2+)</name>
        <dbReference type="ChEBI" id="CHEBI:18420"/>
        <label>2</label>
    </ligand>
</feature>
<feature type="binding site" evidence="1">
    <location>
        <position position="107"/>
    </location>
    <ligand>
        <name>Mg(2+)</name>
        <dbReference type="ChEBI" id="CHEBI:18420"/>
        <label>1</label>
    </ligand>
</feature>
<feature type="binding site" evidence="1">
    <location>
        <position position="107"/>
    </location>
    <ligand>
        <name>Mg(2+)</name>
        <dbReference type="ChEBI" id="CHEBI:18420"/>
        <label>2</label>
    </ligand>
</feature>
<feature type="binding site" evidence="1">
    <location>
        <position position="120"/>
    </location>
    <ligand>
        <name>Mg(2+)</name>
        <dbReference type="ChEBI" id="CHEBI:18420"/>
        <label>2</label>
    </ligand>
</feature>
<feature type="binding site" evidence="1">
    <location>
        <position position="123"/>
    </location>
    <ligand>
        <name>Mg(2+)</name>
        <dbReference type="ChEBI" id="CHEBI:18420"/>
        <label>2</label>
    </ligand>
</feature>
<accession>P0DH22</accession>
<accession>Q79Y37</accession>
<accession>Q8K6F7</accession>
<protein>
    <recommendedName>
        <fullName evidence="1">Nucleoside triphosphate/diphosphate phosphatase</fullName>
        <ecNumber evidence="1">3.6.1.15</ecNumber>
        <ecNumber evidence="1">3.6.1.6</ecNumber>
    </recommendedName>
</protein>
<reference key="1">
    <citation type="journal article" date="2002" name="Proc. Natl. Acad. Sci. U.S.A.">
        <title>Genome sequence of a serotype M3 strain of group A Streptococcus: phage-encoded toxins, the high-virulence phenotype, and clone emergence.</title>
        <authorList>
            <person name="Beres S.B."/>
            <person name="Sylva G.L."/>
            <person name="Barbian K.D."/>
            <person name="Lei B."/>
            <person name="Hoff J.S."/>
            <person name="Mammarella N.D."/>
            <person name="Liu M.-Y."/>
            <person name="Smoot J.C."/>
            <person name="Porcella S.F."/>
            <person name="Parkins L.D."/>
            <person name="Campbell D.S."/>
            <person name="Smith T.M."/>
            <person name="McCormick J.K."/>
            <person name="Leung D.Y.M."/>
            <person name="Schlievert P.M."/>
            <person name="Musser J.M."/>
        </authorList>
    </citation>
    <scope>NUCLEOTIDE SEQUENCE [LARGE SCALE GENOMIC DNA]</scope>
    <source>
        <strain>ATCC BAA-595 / MGAS315</strain>
    </source>
</reference>
<keyword id="KW-0378">Hydrolase</keyword>
<keyword id="KW-0460">Magnesium</keyword>
<keyword id="KW-0479">Metal-binding</keyword>
<dbReference type="EC" id="3.6.1.15" evidence="1"/>
<dbReference type="EC" id="3.6.1.6" evidence="1"/>
<dbReference type="EMBL" id="AE014074">
    <property type="protein sequence ID" value="AAM79963.1"/>
    <property type="molecule type" value="Genomic_DNA"/>
</dbReference>
<dbReference type="RefSeq" id="WP_011054826.1">
    <property type="nucleotide sequence ID" value="NC_004070.1"/>
</dbReference>
<dbReference type="SMR" id="P0DH22"/>
<dbReference type="KEGG" id="spg:SpyM3_1356"/>
<dbReference type="HOGENOM" id="CLU_109787_1_0_9"/>
<dbReference type="Proteomes" id="UP000000564">
    <property type="component" value="Chromosome"/>
</dbReference>
<dbReference type="GO" id="GO:0000287">
    <property type="term" value="F:magnesium ion binding"/>
    <property type="evidence" value="ECO:0007669"/>
    <property type="project" value="UniProtKB-UniRule"/>
</dbReference>
<dbReference type="GO" id="GO:0017110">
    <property type="term" value="F:nucleoside diphosphate phosphatase activity"/>
    <property type="evidence" value="ECO:0007669"/>
    <property type="project" value="UniProtKB-UniRule"/>
</dbReference>
<dbReference type="GO" id="GO:0017111">
    <property type="term" value="F:ribonucleoside triphosphate phosphatase activity"/>
    <property type="evidence" value="ECO:0007669"/>
    <property type="project" value="UniProtKB-UniRule"/>
</dbReference>
<dbReference type="Gene3D" id="2.40.380.10">
    <property type="entry name" value="FomD-like"/>
    <property type="match status" value="1"/>
</dbReference>
<dbReference type="HAMAP" id="MF_01568">
    <property type="entry name" value="Ntdp"/>
    <property type="match status" value="1"/>
</dbReference>
<dbReference type="InterPro" id="IPR007295">
    <property type="entry name" value="DUF402"/>
</dbReference>
<dbReference type="InterPro" id="IPR035930">
    <property type="entry name" value="FomD-like_sf"/>
</dbReference>
<dbReference type="InterPro" id="IPR050212">
    <property type="entry name" value="Ntdp-like"/>
</dbReference>
<dbReference type="InterPro" id="IPR016882">
    <property type="entry name" value="SA1684"/>
</dbReference>
<dbReference type="NCBIfam" id="NF010183">
    <property type="entry name" value="PRK13662.1"/>
    <property type="match status" value="1"/>
</dbReference>
<dbReference type="PANTHER" id="PTHR39159">
    <property type="match status" value="1"/>
</dbReference>
<dbReference type="PANTHER" id="PTHR39159:SF1">
    <property type="entry name" value="UPF0374 PROTEIN YGAC"/>
    <property type="match status" value="1"/>
</dbReference>
<dbReference type="Pfam" id="PF04167">
    <property type="entry name" value="DUF402"/>
    <property type="match status" value="1"/>
</dbReference>
<dbReference type="PIRSF" id="PIRSF028345">
    <property type="entry name" value="UCP028345"/>
    <property type="match status" value="1"/>
</dbReference>
<dbReference type="SUPFAM" id="SSF159234">
    <property type="entry name" value="FomD-like"/>
    <property type="match status" value="1"/>
</dbReference>
<organism>
    <name type="scientific">Streptococcus pyogenes serotype M3 (strain ATCC BAA-595 / MGAS315)</name>
    <dbReference type="NCBI Taxonomy" id="198466"/>
    <lineage>
        <taxon>Bacteria</taxon>
        <taxon>Bacillati</taxon>
        <taxon>Bacillota</taxon>
        <taxon>Bacilli</taxon>
        <taxon>Lactobacillales</taxon>
        <taxon>Streptococcaceae</taxon>
        <taxon>Streptococcus</taxon>
    </lineage>
</organism>
<gene>
    <name type="ordered locus">SpyM3_1356</name>
</gene>
<proteinExistence type="inferred from homology"/>
<evidence type="ECO:0000255" key="1">
    <source>
        <dbReference type="HAMAP-Rule" id="MF_01568"/>
    </source>
</evidence>
<comment type="function">
    <text evidence="1">Has nucleoside phosphatase activity towards nucleoside triphosphates and nucleoside diphosphates.</text>
</comment>
<comment type="catalytic activity">
    <reaction evidence="1">
        <text>a ribonucleoside 5'-triphosphate + H2O = a ribonucleoside 5'-diphosphate + phosphate + H(+)</text>
        <dbReference type="Rhea" id="RHEA:23680"/>
        <dbReference type="ChEBI" id="CHEBI:15377"/>
        <dbReference type="ChEBI" id="CHEBI:15378"/>
        <dbReference type="ChEBI" id="CHEBI:43474"/>
        <dbReference type="ChEBI" id="CHEBI:57930"/>
        <dbReference type="ChEBI" id="CHEBI:61557"/>
        <dbReference type="EC" id="3.6.1.15"/>
    </reaction>
</comment>
<comment type="catalytic activity">
    <reaction evidence="1">
        <text>a ribonucleoside 5'-diphosphate + H2O = a ribonucleoside 5'-phosphate + phosphate + H(+)</text>
        <dbReference type="Rhea" id="RHEA:36799"/>
        <dbReference type="ChEBI" id="CHEBI:15377"/>
        <dbReference type="ChEBI" id="CHEBI:15378"/>
        <dbReference type="ChEBI" id="CHEBI:43474"/>
        <dbReference type="ChEBI" id="CHEBI:57930"/>
        <dbReference type="ChEBI" id="CHEBI:58043"/>
        <dbReference type="EC" id="3.6.1.6"/>
    </reaction>
</comment>
<comment type="cofactor">
    <cofactor evidence="1">
        <name>Mg(2+)</name>
        <dbReference type="ChEBI" id="CHEBI:18420"/>
    </cofactor>
</comment>
<comment type="similarity">
    <text evidence="1">Belongs to the Ntdp family.</text>
</comment>